<feature type="chain" id="PRO_0000164982" description="Putative endonuclease segC">
    <location>
        <begin position="1"/>
        <end position="198"/>
    </location>
</feature>
<feature type="domain" description="GIY-YIG" evidence="2">
    <location>
        <begin position="7"/>
        <end position="90"/>
    </location>
</feature>
<comment type="function">
    <text>Probably involved in the movement of the endonuclease-encoding DNA.</text>
</comment>
<comment type="cofactor">
    <cofactor evidence="1">
        <name>Mg(2+)</name>
        <dbReference type="ChEBI" id="CHEBI:18420"/>
    </cofactor>
</comment>
<comment type="similarity">
    <text evidence="3">To endonucleases of group I introns of fungi and phage.</text>
</comment>
<comment type="sequence caution" evidence="3">
    <conflict type="frameshift">
        <sequence resource="EMBL-CDS" id="AAD42656"/>
    </conflict>
</comment>
<accession>P16010</accession>
<accession>P39233</accession>
<accession>Q9T0U9</accession>
<accession>Q9T0V0</accession>
<dbReference type="EC" id="3.1.-.-"/>
<dbReference type="EMBL" id="Z69339">
    <property type="protein sequence ID" value="CAA93271.1"/>
    <property type="molecule type" value="Genomic_DNA"/>
</dbReference>
<dbReference type="EMBL" id="AF158101">
    <property type="protein sequence ID" value="AAD42656.1"/>
    <property type="status" value="ALT_FRAME"/>
    <property type="molecule type" value="Genomic_DNA"/>
</dbReference>
<dbReference type="EMBL" id="AF158101">
    <property type="protein sequence ID" value="AAD42484.1"/>
    <property type="status" value="ALT_FRAME"/>
    <property type="molecule type" value="Genomic_DNA"/>
</dbReference>
<dbReference type="EMBL" id="X15728">
    <property type="protein sequence ID" value="CAA33750.1"/>
    <property type="molecule type" value="Genomic_DNA"/>
</dbReference>
<dbReference type="PIR" id="S10110">
    <property type="entry name" value="S10110"/>
</dbReference>
<dbReference type="RefSeq" id="NP_049761.1">
    <property type="nucleotide sequence ID" value="NC_000866.4"/>
</dbReference>
<dbReference type="SMR" id="P16010"/>
<dbReference type="GeneID" id="1258721"/>
<dbReference type="KEGG" id="vg:1258701"/>
<dbReference type="KEGG" id="vg:1258721"/>
<dbReference type="OrthoDB" id="18636at10239"/>
<dbReference type="Proteomes" id="UP000009087">
    <property type="component" value="Segment"/>
</dbReference>
<dbReference type="GO" id="GO:0003677">
    <property type="term" value="F:DNA binding"/>
    <property type="evidence" value="ECO:0007669"/>
    <property type="project" value="InterPro"/>
</dbReference>
<dbReference type="GO" id="GO:0004519">
    <property type="term" value="F:endonuclease activity"/>
    <property type="evidence" value="ECO:0007669"/>
    <property type="project" value="UniProtKB-KW"/>
</dbReference>
<dbReference type="CDD" id="cd10444">
    <property type="entry name" value="GIY-YIG_SegABCDEFG"/>
    <property type="match status" value="1"/>
</dbReference>
<dbReference type="InterPro" id="IPR000305">
    <property type="entry name" value="GIY-YIG_endonuc"/>
</dbReference>
<dbReference type="InterPro" id="IPR035901">
    <property type="entry name" value="GIY-YIG_endonuc_sf"/>
</dbReference>
<dbReference type="InterPro" id="IPR003611">
    <property type="entry name" value="NUMOD3"/>
</dbReference>
<dbReference type="Pfam" id="PF07460">
    <property type="entry name" value="NUMOD3"/>
    <property type="match status" value="1"/>
</dbReference>
<dbReference type="SMART" id="SM00465">
    <property type="entry name" value="GIYc"/>
    <property type="match status" value="1"/>
</dbReference>
<dbReference type="SUPFAM" id="SSF64496">
    <property type="entry name" value="DNA-binding domain of intron-encoded endonucleases"/>
    <property type="match status" value="1"/>
</dbReference>
<dbReference type="SUPFAM" id="SSF82771">
    <property type="entry name" value="GIY-YIG endonuclease"/>
    <property type="match status" value="1"/>
</dbReference>
<dbReference type="PROSITE" id="PS50164">
    <property type="entry name" value="GIY_YIG"/>
    <property type="match status" value="1"/>
</dbReference>
<reference key="1">
    <citation type="submission" date="1996-02" db="EMBL/GenBank/DDBJ databases">
        <authorList>
            <person name="Kadyrov F.A."/>
            <person name="Kryukov V.M."/>
        </authorList>
    </citation>
    <scope>NUCLEOTIDE SEQUENCE [GENOMIC DNA]</scope>
</reference>
<reference key="2">
    <citation type="journal article" date="2003" name="Microbiol. Mol. Biol. Rev.">
        <title>Bacteriophage T4 genome.</title>
        <authorList>
            <person name="Miller E.S."/>
            <person name="Kutter E."/>
            <person name="Mosig G."/>
            <person name="Arisaka F."/>
            <person name="Kunisawa T."/>
            <person name="Ruger W."/>
        </authorList>
    </citation>
    <scope>NUCLEOTIDE SEQUENCE [LARGE SCALE GENOMIC DNA]</scope>
</reference>
<reference key="3">
    <citation type="journal article" date="1989" name="New Biol.">
        <title>Functional relationships and structural determinants of two bacteriophage T4 lysozymes: a soluble (gene e) and a baseplate-associated (gene 5) protein.</title>
        <authorList>
            <person name="Mosig G."/>
            <person name="Lin G.W."/>
            <person name="Franklin J."/>
            <person name="Fan W.H."/>
        </authorList>
    </citation>
    <scope>NUCLEOTIDE SEQUENCE [GENOMIC DNA] OF 1-129</scope>
</reference>
<reference key="4">
    <citation type="journal article" date="1992" name="Proc. Natl. Acad. Sci. U.S.A.">
        <title>Identification of a family of bacteriophage T4 genes encoding proteins similar to those present in group I introns of fungi and phage.</title>
        <authorList>
            <person name="Sharma M."/>
            <person name="Ellis R.L."/>
            <person name="Hinton D.M."/>
        </authorList>
    </citation>
    <scope>IDENTIFICATION</scope>
    <scope>POSSIBLE FUNCTION</scope>
</reference>
<name>SEGC_BPT4</name>
<organismHost>
    <name type="scientific">Escherichia coli</name>
    <dbReference type="NCBI Taxonomy" id="562"/>
</organismHost>
<proteinExistence type="predicted"/>
<protein>
    <recommendedName>
        <fullName>Putative endonuclease segC</fullName>
        <ecNumber>3.1.-.-</ecNumber>
    </recommendedName>
    <alternativeName>
        <fullName>Endodeoxyribonuclease segC</fullName>
    </alternativeName>
</protein>
<evidence type="ECO:0000250" key="1"/>
<evidence type="ECO:0000255" key="2">
    <source>
        <dbReference type="PROSITE-ProRule" id="PRU00977"/>
    </source>
</evidence>
<evidence type="ECO:0000305" key="3"/>
<sequence>MPMQDHKYFYLYSITNKTTEKIYVGVHKTSNLDDGYMGSGVAIKNAIKKYGIDNFYKHIIKFFESEKAMYDAEAEIVTEEFVKSKKTYNMKLGGIGGFPKHNTAGAKNGFYGKSHSRETRLKISIKSSRKRGPRGPRGKTLKMCGANNPRYGKIAPNAKSVIINGVLYKSIKIAAKALNINYSTLKGRVKAGYYKCQD</sequence>
<gene>
    <name type="primary">segC</name>
    <name type="synonym">5.1</name>
</gene>
<keyword id="KW-0255">Endonuclease</keyword>
<keyword id="KW-0378">Hydrolase</keyword>
<keyword id="KW-0460">Magnesium</keyword>
<keyword id="KW-0540">Nuclease</keyword>
<keyword id="KW-1185">Reference proteome</keyword>
<organism>
    <name type="scientific">Enterobacteria phage T4</name>
    <name type="common">Bacteriophage T4</name>
    <dbReference type="NCBI Taxonomy" id="10665"/>
    <lineage>
        <taxon>Viruses</taxon>
        <taxon>Duplodnaviria</taxon>
        <taxon>Heunggongvirae</taxon>
        <taxon>Uroviricota</taxon>
        <taxon>Caudoviricetes</taxon>
        <taxon>Straboviridae</taxon>
        <taxon>Tevenvirinae</taxon>
        <taxon>Tequatrovirus</taxon>
    </lineage>
</organism>